<protein>
    <recommendedName>
        <fullName evidence="8">Protein-lysine N-methyltransferase EFM1</fullName>
        <ecNumber evidence="4 5">2.1.1.-</ecNumber>
    </recommendedName>
    <alternativeName>
        <fullName evidence="6">Elongation factor methyltransferase 1</fullName>
    </alternativeName>
</protein>
<organism>
    <name type="scientific">Saccharomyces cerevisiae (strain ATCC 204508 / S288c)</name>
    <name type="common">Baker's yeast</name>
    <dbReference type="NCBI Taxonomy" id="559292"/>
    <lineage>
        <taxon>Eukaryota</taxon>
        <taxon>Fungi</taxon>
        <taxon>Dikarya</taxon>
        <taxon>Ascomycota</taxon>
        <taxon>Saccharomycotina</taxon>
        <taxon>Saccharomycetes</taxon>
        <taxon>Saccharomycetales</taxon>
        <taxon>Saccharomycetaceae</taxon>
        <taxon>Saccharomyces</taxon>
    </lineage>
</organism>
<feature type="chain" id="PRO_0000202879" description="Protein-lysine N-methyltransferase EFM1">
    <location>
        <begin position="1"/>
        <end position="585"/>
    </location>
</feature>
<feature type="domain" description="SET" evidence="1">
    <location>
        <begin position="23"/>
        <end position="281"/>
    </location>
</feature>
<feature type="binding site" evidence="1">
    <location>
        <position position="280"/>
    </location>
    <ligand>
        <name>S-adenosyl-L-methionine</name>
        <dbReference type="ChEBI" id="CHEBI:59789"/>
    </ligand>
</feature>
<proteinExistence type="evidence at protein level"/>
<dbReference type="EC" id="2.1.1.-" evidence="4 5"/>
<dbReference type="EMBL" id="U11583">
    <property type="protein sequence ID" value="AAB65051.1"/>
    <property type="molecule type" value="Genomic_DNA"/>
</dbReference>
<dbReference type="EMBL" id="BK006934">
    <property type="protein sequence ID" value="DAA06647.1"/>
    <property type="molecule type" value="Genomic_DNA"/>
</dbReference>
<dbReference type="PIR" id="S48929">
    <property type="entry name" value="S48929"/>
</dbReference>
<dbReference type="RefSeq" id="NP_011824.1">
    <property type="nucleotide sequence ID" value="NM_001179119.1"/>
</dbReference>
<dbReference type="SMR" id="P38732"/>
<dbReference type="BioGRID" id="36384">
    <property type="interactions" value="61"/>
</dbReference>
<dbReference type="DIP" id="DIP-6582N"/>
<dbReference type="FunCoup" id="P38732">
    <property type="interactions" value="339"/>
</dbReference>
<dbReference type="IntAct" id="P38732">
    <property type="interactions" value="3"/>
</dbReference>
<dbReference type="MINT" id="P38732"/>
<dbReference type="STRING" id="4932.YHL039W"/>
<dbReference type="iPTMnet" id="P38732"/>
<dbReference type="PaxDb" id="4932-YHL039W"/>
<dbReference type="PeptideAtlas" id="P38732"/>
<dbReference type="EnsemblFungi" id="YHL039W_mRNA">
    <property type="protein sequence ID" value="YHL039W"/>
    <property type="gene ID" value="YHL039W"/>
</dbReference>
<dbReference type="GeneID" id="856346"/>
<dbReference type="KEGG" id="sce:YHL039W"/>
<dbReference type="AGR" id="SGD:S000001031"/>
<dbReference type="SGD" id="S000001031">
    <property type="gene designation" value="EFM1"/>
</dbReference>
<dbReference type="VEuPathDB" id="FungiDB:YHL039W"/>
<dbReference type="eggNOG" id="KOG1337">
    <property type="taxonomic scope" value="Eukaryota"/>
</dbReference>
<dbReference type="GeneTree" id="ENSGT00940000153577"/>
<dbReference type="HOGENOM" id="CLU_030667_1_0_1"/>
<dbReference type="InParanoid" id="P38732"/>
<dbReference type="OMA" id="WGIRQFI"/>
<dbReference type="OrthoDB" id="42889at2759"/>
<dbReference type="BioCyc" id="YEAST:G3O-31057-MONOMER"/>
<dbReference type="BioGRID-ORCS" id="856346">
    <property type="hits" value="1 hit in 10 CRISPR screens"/>
</dbReference>
<dbReference type="PRO" id="PR:P38732"/>
<dbReference type="Proteomes" id="UP000002311">
    <property type="component" value="Chromosome VIII"/>
</dbReference>
<dbReference type="RNAct" id="P38732">
    <property type="molecule type" value="protein"/>
</dbReference>
<dbReference type="GO" id="GO:0005737">
    <property type="term" value="C:cytoplasm"/>
    <property type="evidence" value="ECO:0007005"/>
    <property type="project" value="SGD"/>
</dbReference>
<dbReference type="GO" id="GO:0005634">
    <property type="term" value="C:nucleus"/>
    <property type="evidence" value="ECO:0000318"/>
    <property type="project" value="GO_Central"/>
</dbReference>
<dbReference type="GO" id="GO:0016279">
    <property type="term" value="F:protein-lysine N-methyltransferase activity"/>
    <property type="evidence" value="ECO:0000315"/>
    <property type="project" value="SGD"/>
</dbReference>
<dbReference type="GO" id="GO:0032259">
    <property type="term" value="P:methylation"/>
    <property type="evidence" value="ECO:0007669"/>
    <property type="project" value="UniProtKB-KW"/>
</dbReference>
<dbReference type="CDD" id="cd19180">
    <property type="entry name" value="SET_SpSET10-like"/>
    <property type="match status" value="1"/>
</dbReference>
<dbReference type="Gene3D" id="3.90.1410.10">
    <property type="entry name" value="set domain protein methyltransferase, domain 1"/>
    <property type="match status" value="1"/>
</dbReference>
<dbReference type="InterPro" id="IPR017119">
    <property type="entry name" value="Efm1/Rkm1"/>
</dbReference>
<dbReference type="InterPro" id="IPR044432">
    <property type="entry name" value="Set10/Efm1_SET"/>
</dbReference>
<dbReference type="InterPro" id="IPR001214">
    <property type="entry name" value="SET_dom"/>
</dbReference>
<dbReference type="InterPro" id="IPR046341">
    <property type="entry name" value="SET_dom_sf"/>
</dbReference>
<dbReference type="InterPro" id="IPR050600">
    <property type="entry name" value="SETD3_SETD6_MTase"/>
</dbReference>
<dbReference type="PANTHER" id="PTHR13271:SF147">
    <property type="entry name" value="PROTEIN-LYSINE N-METHYLTRANSFERASE EFM1-RELATED"/>
    <property type="match status" value="1"/>
</dbReference>
<dbReference type="PANTHER" id="PTHR13271">
    <property type="entry name" value="UNCHARACTERIZED PUTATIVE METHYLTRANSFERASE"/>
    <property type="match status" value="1"/>
</dbReference>
<dbReference type="PIRSF" id="PIRSF037136">
    <property type="entry name" value="Ribosomal_Lys-mtfrase-1"/>
    <property type="match status" value="1"/>
</dbReference>
<dbReference type="SUPFAM" id="SSF82199">
    <property type="entry name" value="SET domain"/>
    <property type="match status" value="1"/>
</dbReference>
<dbReference type="PROSITE" id="PS50280">
    <property type="entry name" value="SET"/>
    <property type="match status" value="1"/>
</dbReference>
<evidence type="ECO:0000255" key="1">
    <source>
        <dbReference type="PROSITE-ProRule" id="PRU00190"/>
    </source>
</evidence>
<evidence type="ECO:0000269" key="2">
    <source>
    </source>
</evidence>
<evidence type="ECO:0000269" key="3">
    <source>
    </source>
</evidence>
<evidence type="ECO:0000269" key="4">
    <source>
    </source>
</evidence>
<evidence type="ECO:0000269" key="5">
    <source>
    </source>
</evidence>
<evidence type="ECO:0000303" key="6">
    <source>
    </source>
</evidence>
<evidence type="ECO:0000305" key="7"/>
<evidence type="ECO:0000305" key="8">
    <source>
    </source>
</evidence>
<evidence type="ECO:0000312" key="9">
    <source>
        <dbReference type="SGD" id="S000001031"/>
    </source>
</evidence>
<comment type="function">
    <text evidence="4 5">S-adenosyl-L-methionine-dependent protein-lysine N-methyltransferase that monomethylates elongation factor 1-alpha (TEF1/TEF2) at 'Lys-30'.</text>
</comment>
<comment type="subcellular location">
    <subcellularLocation>
        <location evidence="2">Cytoplasm</location>
    </subcellularLocation>
</comment>
<comment type="miscellaneous">
    <text evidence="3">Present with 5170 molecules/cell in log phase SD medium.</text>
</comment>
<comment type="similarity">
    <text evidence="1 7">Belongs to the class V-like SAM-binding methyltransferase superfamily. RKM1 family.</text>
</comment>
<gene>
    <name evidence="6" type="primary">EFM1</name>
    <name evidence="9" type="ordered locus">YHL039W</name>
</gene>
<keyword id="KW-0963">Cytoplasm</keyword>
<keyword id="KW-0489">Methyltransferase</keyword>
<keyword id="KW-1185">Reference proteome</keyword>
<keyword id="KW-0949">S-adenosyl-L-methionine</keyword>
<keyword id="KW-0808">Transferase</keyword>
<name>EFM1_YEAST</name>
<accession>P38732</accession>
<accession>D3DKT0</accession>
<reference key="1">
    <citation type="journal article" date="1994" name="Science">
        <title>Complete nucleotide sequence of Saccharomyces cerevisiae chromosome VIII.</title>
        <authorList>
            <person name="Johnston M."/>
            <person name="Andrews S."/>
            <person name="Brinkman R."/>
            <person name="Cooper J."/>
            <person name="Ding H."/>
            <person name="Dover J."/>
            <person name="Du Z."/>
            <person name="Favello A."/>
            <person name="Fulton L."/>
            <person name="Gattung S."/>
            <person name="Geisel C."/>
            <person name="Kirsten J."/>
            <person name="Kucaba T."/>
            <person name="Hillier L.W."/>
            <person name="Jier M."/>
            <person name="Johnston L."/>
            <person name="Langston Y."/>
            <person name="Latreille P."/>
            <person name="Louis E.J."/>
            <person name="Macri C."/>
            <person name="Mardis E."/>
            <person name="Menezes S."/>
            <person name="Mouser L."/>
            <person name="Nhan M."/>
            <person name="Rifkin L."/>
            <person name="Riles L."/>
            <person name="St Peter H."/>
            <person name="Trevaskis E."/>
            <person name="Vaughan K."/>
            <person name="Vignati D."/>
            <person name="Wilcox L."/>
            <person name="Wohldman P."/>
            <person name="Waterston R."/>
            <person name="Wilson R."/>
            <person name="Vaudin M."/>
        </authorList>
    </citation>
    <scope>NUCLEOTIDE SEQUENCE [LARGE SCALE GENOMIC DNA]</scope>
    <source>
        <strain>ATCC 204508 / S288c</strain>
    </source>
</reference>
<reference key="2">
    <citation type="journal article" date="2014" name="G3 (Bethesda)">
        <title>The reference genome sequence of Saccharomyces cerevisiae: Then and now.</title>
        <authorList>
            <person name="Engel S.R."/>
            <person name="Dietrich F.S."/>
            <person name="Fisk D.G."/>
            <person name="Binkley G."/>
            <person name="Balakrishnan R."/>
            <person name="Costanzo M.C."/>
            <person name="Dwight S.S."/>
            <person name="Hitz B.C."/>
            <person name="Karra K."/>
            <person name="Nash R.S."/>
            <person name="Weng S."/>
            <person name="Wong E.D."/>
            <person name="Lloyd P."/>
            <person name="Skrzypek M.S."/>
            <person name="Miyasato S.R."/>
            <person name="Simison M."/>
            <person name="Cherry J.M."/>
        </authorList>
    </citation>
    <scope>GENOME REANNOTATION</scope>
    <source>
        <strain>ATCC 204508 / S288c</strain>
    </source>
</reference>
<reference key="3">
    <citation type="journal article" date="2003" name="Nature">
        <title>Global analysis of protein localization in budding yeast.</title>
        <authorList>
            <person name="Huh W.-K."/>
            <person name="Falvo J.V."/>
            <person name="Gerke L.C."/>
            <person name="Carroll A.S."/>
            <person name="Howson R.W."/>
            <person name="Weissman J.S."/>
            <person name="O'Shea E.K."/>
        </authorList>
    </citation>
    <scope>SUBCELLULAR LOCATION [LARGE SCALE ANALYSIS]</scope>
</reference>
<reference key="4">
    <citation type="journal article" date="2003" name="Nature">
        <title>Global analysis of protein expression in yeast.</title>
        <authorList>
            <person name="Ghaemmaghami S."/>
            <person name="Huh W.-K."/>
            <person name="Bower K."/>
            <person name="Howson R.W."/>
            <person name="Belle A."/>
            <person name="Dephoure N."/>
            <person name="O'Shea E.K."/>
            <person name="Weissman J.S."/>
        </authorList>
    </citation>
    <scope>LEVEL OF PROTEIN EXPRESSION [LARGE SCALE ANALYSIS]</scope>
</reference>
<reference key="5">
    <citation type="journal article" date="2010" name="Arch. Biochem. Biophys.">
        <title>Two novel methyltransferases acting upon eukaryotic elongation factor 1A in Saccharomyces cerevisiae.</title>
        <authorList>
            <person name="Lipson R.S."/>
            <person name="Webb K.J."/>
            <person name="Clarke S.G."/>
        </authorList>
    </citation>
    <scope>FUNCTION</scope>
</reference>
<reference key="6">
    <citation type="journal article" date="2012" name="Proteomics">
        <title>Methylation of translation-associated proteins in Saccharomyces cerevisiae: Identification of methylated lysines and their methyltransferases.</title>
        <authorList>
            <person name="Couttas T.A."/>
            <person name="Raftery M.J."/>
            <person name="Padula M.P."/>
            <person name="Herbert B.R."/>
            <person name="Wilkins M.R."/>
        </authorList>
    </citation>
    <scope>FUNCTION</scope>
</reference>
<sequence length="585" mass="67452">MITQTELDNCLQWAQNNGAFIDPKISFRITEDAGVSAFVNEKFSPKPDQALIRVPETLLITSQQALSEFSQAANERSLLNSVTQLYLSKLKFGTDAVHLKSFYKPYLDVLPLHLPQPYFWSTDEVMNLHGTDVYLTMRDTLNKLVKEWRMLFQALSIEHSSQDKQFLSLFQENKDSAVVPLEQFCAHINGCKLEDSEWNSFVAYLWSYCIFNSRAFPRVILGRAGTDRTNLNEGFLYPIVDLLNHKNDVPVRWEMNEQNELCFMSQTTTFSAQDELFNNYGNISNEKCLLNYGFWDSSNKFDFSRLTLKLPSTLVSGLPVDFNKSGNFVTDDGETTILQFSLKISEPLPPVLLALFAYLSKLKSEETPTVRSVLEGIDQLTSVVSQRLLFYKNFKIKTSSTQKLRPHVIKLIKLYYQDNKKILNATTEKLSVLQKKIYSNNKEFSLSFKTIFKNDKIFANSLLLVFGAINYEDLITKDCLNDALLLWIVKLINDKSNNQGGFIKQTFKEVSDSIVIEKEDVMEFLPFYKKYFPNLSERIPEIYSVGDWGIRQFIVADTAIDRLVWIRKSNKEPIFLMKKAYDLQI</sequence>